<proteinExistence type="inferred from homology"/>
<evidence type="ECO:0000250" key="1"/>
<evidence type="ECO:0000305" key="2"/>
<organism>
    <name type="scientific">Methanocaldococcus jannaschii (strain ATCC 43067 / DSM 2661 / JAL-1 / JCM 10045 / NBRC 100440)</name>
    <name type="common">Methanococcus jannaschii</name>
    <dbReference type="NCBI Taxonomy" id="243232"/>
    <lineage>
        <taxon>Archaea</taxon>
        <taxon>Methanobacteriati</taxon>
        <taxon>Methanobacteriota</taxon>
        <taxon>Methanomada group</taxon>
        <taxon>Methanococci</taxon>
        <taxon>Methanococcales</taxon>
        <taxon>Methanocaldococcaceae</taxon>
        <taxon>Methanocaldococcus</taxon>
    </lineage>
</organism>
<comment type="function">
    <text evidence="1">CRISPR (clustered regularly interspaced short palindromic repeat) is an adaptive immune system that provides protection against mobile genetic elements (viruses, transposable elements and conjugative plasmids). CRISPR clusters contain spacers, sequences complementary to antecedent mobile elements, and target invading nucleic acids. CRISPR clusters are transcribed and processed into CRISPR RNA (crRNA) (By similarity).</text>
</comment>
<comment type="similarity">
    <text evidence="2">Belongs to the CRISPR-associated protein Cas8a2/Csa4 family. Subtype I-A/Apern subfamily.</text>
</comment>
<accession>Q57830</accession>
<reference key="1">
    <citation type="journal article" date="1996" name="Science">
        <title>Complete genome sequence of the methanogenic archaeon, Methanococcus jannaschii.</title>
        <authorList>
            <person name="Bult C.J."/>
            <person name="White O."/>
            <person name="Olsen G.J."/>
            <person name="Zhou L."/>
            <person name="Fleischmann R.D."/>
            <person name="Sutton G.G."/>
            <person name="Blake J.A."/>
            <person name="FitzGerald L.M."/>
            <person name="Clayton R.A."/>
            <person name="Gocayne J.D."/>
            <person name="Kerlavage A.R."/>
            <person name="Dougherty B.A."/>
            <person name="Tomb J.-F."/>
            <person name="Adams M.D."/>
            <person name="Reich C.I."/>
            <person name="Overbeek R."/>
            <person name="Kirkness E.F."/>
            <person name="Weinstock K.G."/>
            <person name="Merrick J.M."/>
            <person name="Glodek A."/>
            <person name="Scott J.L."/>
            <person name="Geoghagen N.S.M."/>
            <person name="Weidman J.F."/>
            <person name="Fuhrmann J.L."/>
            <person name="Nguyen D."/>
            <person name="Utterback T.R."/>
            <person name="Kelley J.M."/>
            <person name="Peterson J.D."/>
            <person name="Sadow P.W."/>
            <person name="Hanna M.C."/>
            <person name="Cotton M.D."/>
            <person name="Roberts K.M."/>
            <person name="Hurst M.A."/>
            <person name="Kaine B.P."/>
            <person name="Borodovsky M."/>
            <person name="Klenk H.-P."/>
            <person name="Fraser C.M."/>
            <person name="Smith H.O."/>
            <person name="Woese C.R."/>
            <person name="Venter J.C."/>
        </authorList>
    </citation>
    <scope>NUCLEOTIDE SEQUENCE [LARGE SCALE GENOMIC DNA]</scope>
    <source>
        <strain>ATCC 43067 / DSM 2661 / JAL-1 / JCM 10045 / NBRC 100440</strain>
    </source>
</reference>
<name>CAS8A_METJA</name>
<gene>
    <name type="primary">cas8a2</name>
    <name type="ordered locus">MJ0385</name>
</gene>
<keyword id="KW-0051">Antiviral defense</keyword>
<keyword id="KW-1185">Reference proteome</keyword>
<sequence>MIIKGLRVEKEKLQSLQKFWRLRVMLFETPGYNEILDLYIAYGVVECLVREGVENLRFFPIGNKYCIVVEEPTNVNIKNRIEKGMLNALEDMLSLHKAIGKYISTKEDIKIISDVDFSAGANINNVYWDGIPKTLEKIKENIKKGKLSTKSKNTVPLTLMPAAGKYMPKIYGVKGGNPIKIDDSNYALAWIGFHYYAPYINISDNRATYIHIYAIKPLEELGLIEILALKDLKKKINNYQLGKYKFFVNKKLALLYHLTHTESISALEIVTKKNFSVVSYTLENVDNNQAIRSFGEYDLSKLMDFLWYLKATDFYNTIQFVDNILRGDLEVSLTFIDGILYDDLDAVYSAIRKLKSVRISPLIIQSILEWFGNFY</sequence>
<protein>
    <recommendedName>
        <fullName>CRISPR-associated protein Cas8a2/Csa4</fullName>
    </recommendedName>
    <alternativeName>
        <fullName>CRISPR-associated protein Cas8a2/Csa4, subtype I-A/Apern</fullName>
    </alternativeName>
</protein>
<feature type="chain" id="PRO_0000106848" description="CRISPR-associated protein Cas8a2/Csa4">
    <location>
        <begin position="1"/>
        <end position="375"/>
    </location>
</feature>
<dbReference type="EMBL" id="L77117">
    <property type="protein sequence ID" value="AAB98380.1"/>
    <property type="molecule type" value="Genomic_DNA"/>
</dbReference>
<dbReference type="PIR" id="A64348">
    <property type="entry name" value="A64348"/>
</dbReference>
<dbReference type="SMR" id="Q57830"/>
<dbReference type="STRING" id="243232.MJ_0385"/>
<dbReference type="PaxDb" id="243232-MJ_0385"/>
<dbReference type="EnsemblBacteria" id="AAB98380">
    <property type="protein sequence ID" value="AAB98380"/>
    <property type="gene ID" value="MJ_0385"/>
</dbReference>
<dbReference type="KEGG" id="mja:MJ_0385"/>
<dbReference type="eggNOG" id="arCOG01441">
    <property type="taxonomic scope" value="Archaea"/>
</dbReference>
<dbReference type="HOGENOM" id="CLU_722832_0_0_2"/>
<dbReference type="InParanoid" id="Q57830"/>
<dbReference type="OrthoDB" id="98919at2157"/>
<dbReference type="PhylomeDB" id="Q57830"/>
<dbReference type="Proteomes" id="UP000000805">
    <property type="component" value="Chromosome"/>
</dbReference>
<dbReference type="GO" id="GO:0051607">
    <property type="term" value="P:defense response to virus"/>
    <property type="evidence" value="ECO:0007669"/>
    <property type="project" value="UniProtKB-KW"/>
</dbReference>
<dbReference type="CDD" id="cd09666">
    <property type="entry name" value="Cas8a2_I-A"/>
    <property type="match status" value="1"/>
</dbReference>
<dbReference type="InterPro" id="IPR010184">
    <property type="entry name" value="CRISPR-assoc_prot_MJ0385"/>
</dbReference>
<dbReference type="NCBIfam" id="TIGR01914">
    <property type="entry name" value="cas_Csa4"/>
    <property type="match status" value="1"/>
</dbReference>
<dbReference type="Pfam" id="PF09703">
    <property type="entry name" value="Cas_Csa4"/>
    <property type="match status" value="1"/>
</dbReference>